<gene>
    <name type="primary">isdB</name>
    <name type="synonym">frpB</name>
    <name type="synonym">sasJ</name>
    <name type="synonym">sirH</name>
    <name type="ordered locus">SAV1129</name>
</gene>
<keyword id="KW-0134">Cell wall</keyword>
<keyword id="KW-0349">Heme</keyword>
<keyword id="KW-0408">Iron</keyword>
<keyword id="KW-0479">Metal-binding</keyword>
<keyword id="KW-0572">Peptidoglycan-anchor</keyword>
<keyword id="KW-0677">Repeat</keyword>
<keyword id="KW-0964">Secreted</keyword>
<keyword id="KW-0732">Signal</keyword>
<keyword id="KW-0843">Virulence</keyword>
<protein>
    <recommendedName>
        <fullName>Iron-regulated surface determinant protein B</fullName>
    </recommendedName>
    <alternativeName>
        <fullName>Fur-regulated protein B</fullName>
    </alternativeName>
    <alternativeName>
        <fullName>Staphylococcal iron-regulated protein H</fullName>
    </alternativeName>
    <alternativeName>
        <fullName>Staphylococcus aureus surface protein J</fullName>
    </alternativeName>
</protein>
<comment type="function">
    <text evidence="2">Cell wall-anchored surface receptor that extracts heme from oxidized metHb to enable growth on hemoglobin as a sole iron source. Rapidly extracts heme from hemoglobin and transfers it to IsdA or IsdC, which then relays it to the membrane transporter/IsdEF for internalization. Also promotes resistance to hydrogen peroxide and killing by neutrophils.</text>
</comment>
<comment type="subunit">
    <text evidence="2">Interacts with host HBA; this interaction allows heme extraction as iron source. Interacts with IsdA.</text>
</comment>
<comment type="subcellular location">
    <subcellularLocation>
        <location evidence="2">Secreted</location>
        <location evidence="2">Cell wall</location>
        <topology evidence="2">Peptidoglycan-anchor</topology>
    </subcellularLocation>
    <text evidence="2">Anchored to the cell wall by sortase A.</text>
</comment>
<comment type="induction">
    <text evidence="1">Repressed by fur in the presence of iron.</text>
</comment>
<comment type="similarity">
    <text evidence="9">Belongs to the IsdB family.</text>
</comment>
<accession>Q99UX5</accession>
<sequence length="645" mass="72162">MNKQQKEFKSFYSIRKSSLGVASVAISTLLLLMSNGEAQAAAEETGGTNTEAQPKTEAVASPTTTSEKAPETKPVANAVSVSNKEVEAPTSETKEAKEVKEVKAPKETKAVKPAAKATNNTYPILNQELREAIKNPAIKDKDHSAPNSRPIDFEMKKENGEQQFYHYASSVKPARVIFTDSKPEIELGLQSGQFWRKFEVYEGDKKLPIKLVSYDTVKDYAYIRFSVSNGTKAVKIVSSTHFNNKEEKYDYTLMEFAQPIYNSADKFKTEEDYKAEKLLAPYKKAKTLERQVYELNKIQDKLPEKLKAEYKKKLEDTKKALDEQVKSAITEFQNVQPTNEKMTDLQDTKYVVYESVENNESMMDTFVKHPIKTGMLNGKKYMVMETTNDDYWKDFMVEGQRVRTISKDAKNNTRTIIFPYVEGKTLYDAIVKVHVKTIDYDGQYHVRIVDKEAFTKANTDKSNKKEQQDNSAKKEATPATPSKPTPSPVEKESQKQDSQKDDNKQLPSVEKENDASSESGKDKTPATKPTKGEVESSSTTPTKVVSTTQNVAKPTTASSKTTKDVVQTSAGSSEAKDSAPLQKANIKNTNDGHTQSQNNKNTQENKAKSLPQTGEESNKDMTLPLMALLALSSIVAFVLPRKRKN</sequence>
<dbReference type="EMBL" id="BA000017">
    <property type="protein sequence ID" value="BAB57291.1"/>
    <property type="molecule type" value="Genomic_DNA"/>
</dbReference>
<dbReference type="RefSeq" id="WP_001041583.1">
    <property type="nucleotide sequence ID" value="NC_002758.2"/>
</dbReference>
<dbReference type="SMR" id="Q99UX5"/>
<dbReference type="KEGG" id="sav:SAV1129"/>
<dbReference type="HOGENOM" id="CLU_016167_0_0_9"/>
<dbReference type="PRO" id="PR:Q99UX5"/>
<dbReference type="Proteomes" id="UP000002481">
    <property type="component" value="Chromosome"/>
</dbReference>
<dbReference type="GO" id="GO:0005576">
    <property type="term" value="C:extracellular region"/>
    <property type="evidence" value="ECO:0007669"/>
    <property type="project" value="UniProtKB-KW"/>
</dbReference>
<dbReference type="GO" id="GO:0015232">
    <property type="term" value="F:heme transmembrane transporter activity"/>
    <property type="evidence" value="ECO:0007669"/>
    <property type="project" value="InterPro"/>
</dbReference>
<dbReference type="GO" id="GO:0046872">
    <property type="term" value="F:metal ion binding"/>
    <property type="evidence" value="ECO:0007669"/>
    <property type="project" value="UniProtKB-KW"/>
</dbReference>
<dbReference type="CDD" id="cd06920">
    <property type="entry name" value="NEAT"/>
    <property type="match status" value="1"/>
</dbReference>
<dbReference type="Gene3D" id="1.20.58.1270">
    <property type="match status" value="1"/>
</dbReference>
<dbReference type="Gene3D" id="2.60.40.1850">
    <property type="match status" value="2"/>
</dbReference>
<dbReference type="InterPro" id="IPR019929">
    <property type="entry name" value="Iron-reg_IsdB"/>
</dbReference>
<dbReference type="InterPro" id="IPR048652">
    <property type="entry name" value="Isd_H_B_linker"/>
</dbReference>
<dbReference type="InterPro" id="IPR050436">
    <property type="entry name" value="IsdA"/>
</dbReference>
<dbReference type="InterPro" id="IPR019931">
    <property type="entry name" value="LPXTG_anchor"/>
</dbReference>
<dbReference type="InterPro" id="IPR006635">
    <property type="entry name" value="NEAT_dom"/>
</dbReference>
<dbReference type="InterPro" id="IPR037250">
    <property type="entry name" value="NEAT_dom_sf"/>
</dbReference>
<dbReference type="InterPro" id="IPR005877">
    <property type="entry name" value="YSIRK_signal_dom"/>
</dbReference>
<dbReference type="NCBIfam" id="TIGR03657">
    <property type="entry name" value="IsdB"/>
    <property type="match status" value="1"/>
</dbReference>
<dbReference type="NCBIfam" id="TIGR01167">
    <property type="entry name" value="LPXTG_anchor"/>
    <property type="match status" value="1"/>
</dbReference>
<dbReference type="NCBIfam" id="TIGR01168">
    <property type="entry name" value="YSIRK_signal"/>
    <property type="match status" value="1"/>
</dbReference>
<dbReference type="PANTHER" id="PTHR37824">
    <property type="entry name" value="IRON-REGULATED SURFACE DETERMINANT PROTEIN C"/>
    <property type="match status" value="1"/>
</dbReference>
<dbReference type="PANTHER" id="PTHR37824:SF1">
    <property type="entry name" value="IRON-REGULATED SURFACE DETERMINANT PROTEIN C"/>
    <property type="match status" value="1"/>
</dbReference>
<dbReference type="Pfam" id="PF00746">
    <property type="entry name" value="Gram_pos_anchor"/>
    <property type="match status" value="1"/>
</dbReference>
<dbReference type="Pfam" id="PF20861">
    <property type="entry name" value="Isd_H_B_linker"/>
    <property type="match status" value="1"/>
</dbReference>
<dbReference type="Pfam" id="PF05031">
    <property type="entry name" value="NEAT"/>
    <property type="match status" value="2"/>
</dbReference>
<dbReference type="Pfam" id="PF04650">
    <property type="entry name" value="YSIRK_signal"/>
    <property type="match status" value="1"/>
</dbReference>
<dbReference type="SMART" id="SM00725">
    <property type="entry name" value="NEAT"/>
    <property type="match status" value="2"/>
</dbReference>
<dbReference type="SUPFAM" id="SSF158911">
    <property type="entry name" value="NEAT domain-like"/>
    <property type="match status" value="2"/>
</dbReference>
<dbReference type="PROSITE" id="PS50847">
    <property type="entry name" value="GRAM_POS_ANCHORING"/>
    <property type="match status" value="1"/>
</dbReference>
<dbReference type="PROSITE" id="PS50978">
    <property type="entry name" value="NEAT"/>
    <property type="match status" value="2"/>
</dbReference>
<feature type="signal peptide" evidence="5">
    <location>
        <begin position="1"/>
        <end position="40"/>
    </location>
</feature>
<feature type="chain" id="PRO_0000292573" description="Iron-regulated surface determinant protein B">
    <location>
        <begin position="41"/>
        <end position="613"/>
    </location>
</feature>
<feature type="propeptide" id="PRO_0000292574" description="Removed by sortase" evidence="7">
    <location>
        <begin position="614"/>
        <end position="645"/>
    </location>
</feature>
<feature type="domain" description="NEAT 1" evidence="6">
    <location>
        <begin position="144"/>
        <end position="269"/>
    </location>
</feature>
<feature type="domain" description="NEAT 2" evidence="6">
    <location>
        <begin position="341"/>
        <end position="458"/>
    </location>
</feature>
<feature type="region of interest" description="Disordered" evidence="8">
    <location>
        <begin position="38"/>
        <end position="113"/>
    </location>
</feature>
<feature type="region of interest" description="Disordered" evidence="8">
    <location>
        <begin position="458"/>
        <end position="619"/>
    </location>
</feature>
<feature type="short sequence motif" description="YSIRK-G/S signaling motif" evidence="3">
    <location>
        <begin position="12"/>
        <end position="23"/>
    </location>
</feature>
<feature type="short sequence motif" description="LPXTG sorting signal" evidence="7">
    <location>
        <begin position="610"/>
        <end position="614"/>
    </location>
</feature>
<feature type="compositionally biased region" description="Low complexity" evidence="8">
    <location>
        <begin position="38"/>
        <end position="53"/>
    </location>
</feature>
<feature type="compositionally biased region" description="Basic and acidic residues" evidence="8">
    <location>
        <begin position="84"/>
        <end position="110"/>
    </location>
</feature>
<feature type="compositionally biased region" description="Basic and acidic residues" evidence="8">
    <location>
        <begin position="458"/>
        <end position="476"/>
    </location>
</feature>
<feature type="compositionally biased region" description="Basic and acidic residues" evidence="8">
    <location>
        <begin position="489"/>
        <end position="534"/>
    </location>
</feature>
<feature type="compositionally biased region" description="Low complexity" evidence="8">
    <location>
        <begin position="535"/>
        <end position="560"/>
    </location>
</feature>
<feature type="compositionally biased region" description="Polar residues" evidence="8">
    <location>
        <begin position="585"/>
        <end position="615"/>
    </location>
</feature>
<feature type="binding site" description="axial binding residue" evidence="4">
    <location>
        <position position="362"/>
    </location>
    <ligand>
        <name>heme</name>
        <dbReference type="ChEBI" id="CHEBI:30413"/>
    </ligand>
    <ligandPart>
        <name>Fe</name>
        <dbReference type="ChEBI" id="CHEBI:18248"/>
    </ligandPart>
</feature>
<feature type="binding site" description="axial binding residue" evidence="4">
    <location>
        <position position="440"/>
    </location>
    <ligand>
        <name>heme</name>
        <dbReference type="ChEBI" id="CHEBI:30413"/>
    </ligand>
    <ligandPart>
        <name>Fe</name>
        <dbReference type="ChEBI" id="CHEBI:18248"/>
    </ligandPart>
</feature>
<feature type="modified residue" description="Pentaglycyl murein peptidoglycan amidated threonine" evidence="7">
    <location>
        <position position="613"/>
    </location>
</feature>
<reference key="1">
    <citation type="journal article" date="2001" name="Lancet">
        <title>Whole genome sequencing of meticillin-resistant Staphylococcus aureus.</title>
        <authorList>
            <person name="Kuroda M."/>
            <person name="Ohta T."/>
            <person name="Uchiyama I."/>
            <person name="Baba T."/>
            <person name="Yuzawa H."/>
            <person name="Kobayashi I."/>
            <person name="Cui L."/>
            <person name="Oguchi A."/>
            <person name="Aoki K."/>
            <person name="Nagai Y."/>
            <person name="Lian J.-Q."/>
            <person name="Ito T."/>
            <person name="Kanamori M."/>
            <person name="Matsumaru H."/>
            <person name="Maruyama A."/>
            <person name="Murakami H."/>
            <person name="Hosoyama A."/>
            <person name="Mizutani-Ui Y."/>
            <person name="Takahashi N.K."/>
            <person name="Sawano T."/>
            <person name="Inoue R."/>
            <person name="Kaito C."/>
            <person name="Sekimizu K."/>
            <person name="Hirakawa H."/>
            <person name="Kuhara S."/>
            <person name="Goto S."/>
            <person name="Yabuzaki J."/>
            <person name="Kanehisa M."/>
            <person name="Yamashita A."/>
            <person name="Oshima K."/>
            <person name="Furuya K."/>
            <person name="Yoshino C."/>
            <person name="Shiba T."/>
            <person name="Hattori M."/>
            <person name="Ogasawara N."/>
            <person name="Hayashi H."/>
            <person name="Hiramatsu K."/>
        </authorList>
    </citation>
    <scope>NUCLEOTIDE SEQUENCE [LARGE SCALE GENOMIC DNA]</scope>
    <source>
        <strain>Mu50 / ATCC 700699</strain>
    </source>
</reference>
<evidence type="ECO:0000250" key="1"/>
<evidence type="ECO:0000250" key="2">
    <source>
        <dbReference type="UniProtKB" id="A6QG30"/>
    </source>
</evidence>
<evidence type="ECO:0000250" key="3">
    <source>
        <dbReference type="UniProtKB" id="Q2FZF0"/>
    </source>
</evidence>
<evidence type="ECO:0000250" key="4">
    <source>
        <dbReference type="UniProtKB" id="Q7A656"/>
    </source>
</evidence>
<evidence type="ECO:0000255" key="5"/>
<evidence type="ECO:0000255" key="6">
    <source>
        <dbReference type="PROSITE-ProRule" id="PRU00337"/>
    </source>
</evidence>
<evidence type="ECO:0000255" key="7">
    <source>
        <dbReference type="PROSITE-ProRule" id="PRU00477"/>
    </source>
</evidence>
<evidence type="ECO:0000256" key="8">
    <source>
        <dbReference type="SAM" id="MobiDB-lite"/>
    </source>
</evidence>
<evidence type="ECO:0000305" key="9"/>
<name>ISDB_STAAM</name>
<proteinExistence type="inferred from homology"/>
<organism>
    <name type="scientific">Staphylococcus aureus (strain Mu50 / ATCC 700699)</name>
    <dbReference type="NCBI Taxonomy" id="158878"/>
    <lineage>
        <taxon>Bacteria</taxon>
        <taxon>Bacillati</taxon>
        <taxon>Bacillota</taxon>
        <taxon>Bacilli</taxon>
        <taxon>Bacillales</taxon>
        <taxon>Staphylococcaceae</taxon>
        <taxon>Staphylococcus</taxon>
    </lineage>
</organism>